<dbReference type="EC" id="1.1.1.85" evidence="1"/>
<dbReference type="EMBL" id="CP000251">
    <property type="protein sequence ID" value="ABC81840.1"/>
    <property type="molecule type" value="Genomic_DNA"/>
</dbReference>
<dbReference type="RefSeq" id="WP_011421122.1">
    <property type="nucleotide sequence ID" value="NC_007760.1"/>
</dbReference>
<dbReference type="SMR" id="Q2IJK7"/>
<dbReference type="STRING" id="290397.Adeh_2070"/>
<dbReference type="KEGG" id="ade:Adeh_2070"/>
<dbReference type="eggNOG" id="COG0473">
    <property type="taxonomic scope" value="Bacteria"/>
</dbReference>
<dbReference type="HOGENOM" id="CLU_031953_0_3_7"/>
<dbReference type="OrthoDB" id="9806254at2"/>
<dbReference type="UniPathway" id="UPA00048">
    <property type="reaction ID" value="UER00072"/>
</dbReference>
<dbReference type="Proteomes" id="UP000001935">
    <property type="component" value="Chromosome"/>
</dbReference>
<dbReference type="GO" id="GO:0005829">
    <property type="term" value="C:cytosol"/>
    <property type="evidence" value="ECO:0007669"/>
    <property type="project" value="TreeGrafter"/>
</dbReference>
<dbReference type="GO" id="GO:0003862">
    <property type="term" value="F:3-isopropylmalate dehydrogenase activity"/>
    <property type="evidence" value="ECO:0007669"/>
    <property type="project" value="UniProtKB-UniRule"/>
</dbReference>
<dbReference type="GO" id="GO:0000287">
    <property type="term" value="F:magnesium ion binding"/>
    <property type="evidence" value="ECO:0007669"/>
    <property type="project" value="InterPro"/>
</dbReference>
<dbReference type="GO" id="GO:0051287">
    <property type="term" value="F:NAD binding"/>
    <property type="evidence" value="ECO:0007669"/>
    <property type="project" value="InterPro"/>
</dbReference>
<dbReference type="GO" id="GO:0009098">
    <property type="term" value="P:L-leucine biosynthetic process"/>
    <property type="evidence" value="ECO:0007669"/>
    <property type="project" value="UniProtKB-UniRule"/>
</dbReference>
<dbReference type="FunFam" id="3.40.718.10:FF:000006">
    <property type="entry name" value="3-isopropylmalate dehydrogenase"/>
    <property type="match status" value="1"/>
</dbReference>
<dbReference type="Gene3D" id="3.40.718.10">
    <property type="entry name" value="Isopropylmalate Dehydrogenase"/>
    <property type="match status" value="1"/>
</dbReference>
<dbReference type="HAMAP" id="MF_01033">
    <property type="entry name" value="LeuB_type1"/>
    <property type="match status" value="1"/>
</dbReference>
<dbReference type="InterPro" id="IPR019818">
    <property type="entry name" value="IsoCit/isopropylmalate_DH_CS"/>
</dbReference>
<dbReference type="InterPro" id="IPR024084">
    <property type="entry name" value="IsoPropMal-DH-like_dom"/>
</dbReference>
<dbReference type="InterPro" id="IPR004429">
    <property type="entry name" value="Isopropylmalate_DH"/>
</dbReference>
<dbReference type="NCBIfam" id="TIGR00169">
    <property type="entry name" value="leuB"/>
    <property type="match status" value="1"/>
</dbReference>
<dbReference type="PANTHER" id="PTHR42979">
    <property type="entry name" value="3-ISOPROPYLMALATE DEHYDROGENASE"/>
    <property type="match status" value="1"/>
</dbReference>
<dbReference type="PANTHER" id="PTHR42979:SF1">
    <property type="entry name" value="3-ISOPROPYLMALATE DEHYDROGENASE"/>
    <property type="match status" value="1"/>
</dbReference>
<dbReference type="Pfam" id="PF00180">
    <property type="entry name" value="Iso_dh"/>
    <property type="match status" value="1"/>
</dbReference>
<dbReference type="SMART" id="SM01329">
    <property type="entry name" value="Iso_dh"/>
    <property type="match status" value="1"/>
</dbReference>
<dbReference type="SUPFAM" id="SSF53659">
    <property type="entry name" value="Isocitrate/Isopropylmalate dehydrogenase-like"/>
    <property type="match status" value="1"/>
</dbReference>
<dbReference type="PROSITE" id="PS00470">
    <property type="entry name" value="IDH_IMDH"/>
    <property type="match status" value="1"/>
</dbReference>
<accession>Q2IJK7</accession>
<name>LEU3_ANADE</name>
<evidence type="ECO:0000255" key="1">
    <source>
        <dbReference type="HAMAP-Rule" id="MF_01033"/>
    </source>
</evidence>
<keyword id="KW-0028">Amino-acid biosynthesis</keyword>
<keyword id="KW-0100">Branched-chain amino acid biosynthesis</keyword>
<keyword id="KW-0963">Cytoplasm</keyword>
<keyword id="KW-0432">Leucine biosynthesis</keyword>
<keyword id="KW-0460">Magnesium</keyword>
<keyword id="KW-0464">Manganese</keyword>
<keyword id="KW-0479">Metal-binding</keyword>
<keyword id="KW-0520">NAD</keyword>
<keyword id="KW-0560">Oxidoreductase</keyword>
<keyword id="KW-1185">Reference proteome</keyword>
<gene>
    <name evidence="1" type="primary">leuB</name>
    <name type="ordered locus">Adeh_2070</name>
</gene>
<organism>
    <name type="scientific">Anaeromyxobacter dehalogenans (strain 2CP-C)</name>
    <dbReference type="NCBI Taxonomy" id="290397"/>
    <lineage>
        <taxon>Bacteria</taxon>
        <taxon>Pseudomonadati</taxon>
        <taxon>Myxococcota</taxon>
        <taxon>Myxococcia</taxon>
        <taxon>Myxococcales</taxon>
        <taxon>Cystobacterineae</taxon>
        <taxon>Anaeromyxobacteraceae</taxon>
        <taxon>Anaeromyxobacter</taxon>
    </lineage>
</organism>
<reference key="1">
    <citation type="submission" date="2006-01" db="EMBL/GenBank/DDBJ databases">
        <title>Complete sequence of Anaeromyxobacter dehalogenans 2CP-C.</title>
        <authorList>
            <person name="Copeland A."/>
            <person name="Lucas S."/>
            <person name="Lapidus A."/>
            <person name="Barry K."/>
            <person name="Detter J.C."/>
            <person name="Glavina T."/>
            <person name="Hammon N."/>
            <person name="Israni S."/>
            <person name="Pitluck S."/>
            <person name="Brettin T."/>
            <person name="Bruce D."/>
            <person name="Han C."/>
            <person name="Tapia R."/>
            <person name="Gilna P."/>
            <person name="Kiss H."/>
            <person name="Schmutz J."/>
            <person name="Larimer F."/>
            <person name="Land M."/>
            <person name="Kyrpides N."/>
            <person name="Anderson I."/>
            <person name="Sanford R.A."/>
            <person name="Ritalahti K.M."/>
            <person name="Thomas H.S."/>
            <person name="Kirby J.R."/>
            <person name="Zhulin I.B."/>
            <person name="Loeffler F.E."/>
            <person name="Richardson P."/>
        </authorList>
    </citation>
    <scope>NUCLEOTIDE SEQUENCE [LARGE SCALE GENOMIC DNA]</scope>
    <source>
        <strain>2CP-C</strain>
    </source>
</reference>
<protein>
    <recommendedName>
        <fullName evidence="1">3-isopropylmalate dehydrogenase</fullName>
        <ecNumber evidence="1">1.1.1.85</ecNumber>
    </recommendedName>
    <alternativeName>
        <fullName evidence="1">3-IPM-DH</fullName>
    </alternativeName>
    <alternativeName>
        <fullName evidence="1">Beta-IPM dehydrogenase</fullName>
        <shortName evidence="1">IMDH</shortName>
    </alternativeName>
</protein>
<comment type="function">
    <text evidence="1">Catalyzes the oxidation of 3-carboxy-2-hydroxy-4-methylpentanoate (3-isopropylmalate) to 3-carboxy-4-methyl-2-oxopentanoate. The product decarboxylates to 4-methyl-2 oxopentanoate.</text>
</comment>
<comment type="catalytic activity">
    <reaction evidence="1">
        <text>(2R,3S)-3-isopropylmalate + NAD(+) = 4-methyl-2-oxopentanoate + CO2 + NADH</text>
        <dbReference type="Rhea" id="RHEA:32271"/>
        <dbReference type="ChEBI" id="CHEBI:16526"/>
        <dbReference type="ChEBI" id="CHEBI:17865"/>
        <dbReference type="ChEBI" id="CHEBI:35121"/>
        <dbReference type="ChEBI" id="CHEBI:57540"/>
        <dbReference type="ChEBI" id="CHEBI:57945"/>
        <dbReference type="EC" id="1.1.1.85"/>
    </reaction>
</comment>
<comment type="cofactor">
    <cofactor evidence="1">
        <name>Mg(2+)</name>
        <dbReference type="ChEBI" id="CHEBI:18420"/>
    </cofactor>
    <cofactor evidence="1">
        <name>Mn(2+)</name>
        <dbReference type="ChEBI" id="CHEBI:29035"/>
    </cofactor>
    <text evidence="1">Binds 1 Mg(2+) or Mn(2+) ion per subunit.</text>
</comment>
<comment type="pathway">
    <text evidence="1">Amino-acid biosynthesis; L-leucine biosynthesis; L-leucine from 3-methyl-2-oxobutanoate: step 3/4.</text>
</comment>
<comment type="subunit">
    <text evidence="1">Homodimer.</text>
</comment>
<comment type="subcellular location">
    <subcellularLocation>
        <location evidence="1">Cytoplasm</location>
    </subcellularLocation>
</comment>
<comment type="similarity">
    <text evidence="1">Belongs to the isocitrate and isopropylmalate dehydrogenases family. LeuB type 1 subfamily.</text>
</comment>
<proteinExistence type="inferred from homology"/>
<feature type="chain" id="PRO_0000250101" description="3-isopropylmalate dehydrogenase">
    <location>
        <begin position="1"/>
        <end position="353"/>
    </location>
</feature>
<feature type="binding site" evidence="1">
    <location>
        <begin position="76"/>
        <end position="89"/>
    </location>
    <ligand>
        <name>NAD(+)</name>
        <dbReference type="ChEBI" id="CHEBI:57540"/>
    </ligand>
</feature>
<feature type="binding site" evidence="1">
    <location>
        <position position="96"/>
    </location>
    <ligand>
        <name>substrate</name>
    </ligand>
</feature>
<feature type="binding site" evidence="1">
    <location>
        <position position="106"/>
    </location>
    <ligand>
        <name>substrate</name>
    </ligand>
</feature>
<feature type="binding site" evidence="1">
    <location>
        <position position="134"/>
    </location>
    <ligand>
        <name>substrate</name>
    </ligand>
</feature>
<feature type="binding site" evidence="1">
    <location>
        <position position="223"/>
    </location>
    <ligand>
        <name>Mg(2+)</name>
        <dbReference type="ChEBI" id="CHEBI:18420"/>
    </ligand>
</feature>
<feature type="binding site" evidence="1">
    <location>
        <position position="223"/>
    </location>
    <ligand>
        <name>substrate</name>
    </ligand>
</feature>
<feature type="binding site" evidence="1">
    <location>
        <position position="247"/>
    </location>
    <ligand>
        <name>Mg(2+)</name>
        <dbReference type="ChEBI" id="CHEBI:18420"/>
    </ligand>
</feature>
<feature type="binding site" evidence="1">
    <location>
        <position position="251"/>
    </location>
    <ligand>
        <name>Mg(2+)</name>
        <dbReference type="ChEBI" id="CHEBI:18420"/>
    </ligand>
</feature>
<feature type="binding site" evidence="1">
    <location>
        <begin position="281"/>
        <end position="293"/>
    </location>
    <ligand>
        <name>NAD(+)</name>
        <dbReference type="ChEBI" id="CHEBI:57540"/>
    </ligand>
</feature>
<feature type="site" description="Important for catalysis" evidence="1">
    <location>
        <position position="141"/>
    </location>
</feature>
<feature type="site" description="Important for catalysis" evidence="1">
    <location>
        <position position="191"/>
    </location>
</feature>
<sequence length="353" mass="37286">MNAKIVVLPGDGIGPEVTAEAVRVLEAVARRGGHALSFTERLMGGCSIDAHGTALTPEVLADCQAADAVLLGAVGGPKWDDPRAKVRPEQGLLGLRKGLGVFANLRPVRVHPSLLDSSPLRPEKLRGVDIMVIRELTGGLYFGQPKGRDVKDGHARAVDTLEYQDFEVRRVVELAFRIAKGRKKKVTSVDKANVLESSRLWRELATAIGQANPDVALDHMLVDTAAMRLVTSPATLDVVVTENMFGDILTDEASVLAGSMGMLPSASIGEQGPGLYEPIHGSAPDIAGKGIANPVGTVLSAALLLRHSLGLEPEAAAIERAVDQTITDGCRTADLGGKLSTRAMADEILKRLA</sequence>